<sequence>MRLHFLFYRSIEFMYYKKSRHKIFCITLSLYFLTAHKRPSARNPITDFFSRIWGPCFYKWSRHQLLLVNQLMLSPCRNKCSLTSADQCITANEDTTK</sequence>
<dbReference type="EMBL" id="AF005370">
    <property type="protein sequence ID" value="AAC58052.1"/>
    <property type="molecule type" value="Genomic_DNA"/>
</dbReference>
<dbReference type="PIR" id="T03100">
    <property type="entry name" value="T03100"/>
</dbReference>
<dbReference type="RefSeq" id="NP_065504.1">
    <property type="nucleotide sequence ID" value="NC_002531.1"/>
</dbReference>
<dbReference type="KEGG" id="vg:911788"/>
<dbReference type="Proteomes" id="UP000000941">
    <property type="component" value="Segment"/>
</dbReference>
<name>VGA1_ALHV1</name>
<protein>
    <recommendedName>
        <fullName>Uncharacterized gene A1 protein</fullName>
    </recommendedName>
</protein>
<organism>
    <name type="scientific">Alcelaphine herpesvirus 1 (strain C500)</name>
    <name type="common">AlHV-1</name>
    <name type="synonym">Malignant catarrhal fever virus</name>
    <dbReference type="NCBI Taxonomy" id="654901"/>
    <lineage>
        <taxon>Viruses</taxon>
        <taxon>Duplodnaviria</taxon>
        <taxon>Heunggongvirae</taxon>
        <taxon>Peploviricota</taxon>
        <taxon>Herviviricetes</taxon>
        <taxon>Herpesvirales</taxon>
        <taxon>Orthoherpesviridae</taxon>
        <taxon>Gammaherpesvirinae</taxon>
        <taxon>Macavirus</taxon>
        <taxon>Macavirus alcelaphinegamma1</taxon>
    </lineage>
</organism>
<gene>
    <name type="primary">A1</name>
</gene>
<organismHost>
    <name type="scientific">Connochaetes taurinus</name>
    <name type="common">Blue wildebeest</name>
    <dbReference type="NCBI Taxonomy" id="9927"/>
</organismHost>
<accession>O36358</accession>
<keyword id="KW-1185">Reference proteome</keyword>
<feature type="chain" id="PRO_0000405723" description="Uncharacterized gene A1 protein">
    <location>
        <begin position="1"/>
        <end position="97"/>
    </location>
</feature>
<proteinExistence type="predicted"/>
<reference key="1">
    <citation type="journal article" date="1997" name="J. Virol.">
        <title>Primary structure of the alcelaphine herpesvirus 1 genome.</title>
        <authorList>
            <person name="Ensser A."/>
            <person name="Pflanz R."/>
            <person name="Fleckenstein B."/>
        </authorList>
    </citation>
    <scope>NUCLEOTIDE SEQUENCE [LARGE SCALE GENOMIC DNA]</scope>
</reference>